<organism>
    <name type="scientific">Methanoregula boonei (strain DSM 21154 / JCM 14090 / 6A8)</name>
    <dbReference type="NCBI Taxonomy" id="456442"/>
    <lineage>
        <taxon>Archaea</taxon>
        <taxon>Methanobacteriati</taxon>
        <taxon>Methanobacteriota</taxon>
        <taxon>Stenosarchaea group</taxon>
        <taxon>Methanomicrobia</taxon>
        <taxon>Methanomicrobiales</taxon>
        <taxon>Methanoregulaceae</taxon>
        <taxon>Methanoregula</taxon>
    </lineage>
</organism>
<feature type="chain" id="PRO_0000323235" description="Small ribosomal subunit protein uS5">
    <location>
        <begin position="1"/>
        <end position="205"/>
    </location>
</feature>
<feature type="domain" description="S5 DRBM" evidence="1">
    <location>
        <begin position="49"/>
        <end position="112"/>
    </location>
</feature>
<reference key="1">
    <citation type="journal article" date="2015" name="Microbiology">
        <title>Genome of Methanoregula boonei 6A8 reveals adaptations to oligotrophic peatland environments.</title>
        <authorList>
            <person name="Braeuer S."/>
            <person name="Cadillo-Quiroz H."/>
            <person name="Kyrpides N."/>
            <person name="Woyke T."/>
            <person name="Goodwin L."/>
            <person name="Detter C."/>
            <person name="Podell S."/>
            <person name="Yavitt J.B."/>
            <person name="Zinder S.H."/>
        </authorList>
    </citation>
    <scope>NUCLEOTIDE SEQUENCE [LARGE SCALE GENOMIC DNA]</scope>
    <source>
        <strain>DSM 21154 / JCM 14090 / 6A8</strain>
    </source>
</reference>
<comment type="function">
    <text evidence="1">With S4 and S12 plays an important role in translational accuracy.</text>
</comment>
<comment type="subunit">
    <text evidence="1">Part of the 30S ribosomal subunit. Contacts protein S4.</text>
</comment>
<comment type="domain">
    <text>The N-terminal domain interacts with the head of the 30S subunit; the C-terminal domain interacts with the body and contacts protein S4. The interaction surface between S4 and S5 is involved in control of translational fidelity.</text>
</comment>
<comment type="similarity">
    <text evidence="1">Belongs to the universal ribosomal protein uS5 family.</text>
</comment>
<accession>A7I5Q9</accession>
<evidence type="ECO:0000255" key="1">
    <source>
        <dbReference type="HAMAP-Rule" id="MF_01307"/>
    </source>
</evidence>
<evidence type="ECO:0000305" key="2"/>
<sequence>MAYEKAEWRPVTGLGKQVASGEIKSIDQVLESGRPIKEPEIVDMFLPDLEDEVLDIAMMQRMTDSGRRVQFRAVVIVGNRNGYIGFGQGKDVQVGDAIKKAITKAKMNLVKVRRGCGSWECGCAVLHSIPMQVEGTAGSVRVTLKPAPQGIGLVTGDISKKVLELAGIKDAWTFARGQTRTTINFAKATFNALKETNMIRTGRSE</sequence>
<name>RS5_METB6</name>
<proteinExistence type="inferred from homology"/>
<keyword id="KW-1185">Reference proteome</keyword>
<keyword id="KW-0687">Ribonucleoprotein</keyword>
<keyword id="KW-0689">Ribosomal protein</keyword>
<keyword id="KW-0694">RNA-binding</keyword>
<keyword id="KW-0699">rRNA-binding</keyword>
<dbReference type="EMBL" id="CP000780">
    <property type="protein sequence ID" value="ABS55070.1"/>
    <property type="molecule type" value="Genomic_DNA"/>
</dbReference>
<dbReference type="RefSeq" id="WP_012106091.1">
    <property type="nucleotide sequence ID" value="NC_009712.1"/>
</dbReference>
<dbReference type="SMR" id="A7I5Q9"/>
<dbReference type="STRING" id="456442.Mboo_0552"/>
<dbReference type="GeneID" id="5411174"/>
<dbReference type="KEGG" id="mbn:Mboo_0552"/>
<dbReference type="eggNOG" id="arCOG04087">
    <property type="taxonomic scope" value="Archaea"/>
</dbReference>
<dbReference type="HOGENOM" id="CLU_065898_0_1_2"/>
<dbReference type="OrthoDB" id="38155at2157"/>
<dbReference type="Proteomes" id="UP000002408">
    <property type="component" value="Chromosome"/>
</dbReference>
<dbReference type="GO" id="GO:0015935">
    <property type="term" value="C:small ribosomal subunit"/>
    <property type="evidence" value="ECO:0007669"/>
    <property type="project" value="InterPro"/>
</dbReference>
<dbReference type="GO" id="GO:0019843">
    <property type="term" value="F:rRNA binding"/>
    <property type="evidence" value="ECO:0007669"/>
    <property type="project" value="UniProtKB-UniRule"/>
</dbReference>
<dbReference type="GO" id="GO:0003735">
    <property type="term" value="F:structural constituent of ribosome"/>
    <property type="evidence" value="ECO:0007669"/>
    <property type="project" value="InterPro"/>
</dbReference>
<dbReference type="GO" id="GO:0006412">
    <property type="term" value="P:translation"/>
    <property type="evidence" value="ECO:0007669"/>
    <property type="project" value="UniProtKB-UniRule"/>
</dbReference>
<dbReference type="FunFam" id="3.30.160.20:FF:000002">
    <property type="entry name" value="40S ribosomal protein S2"/>
    <property type="match status" value="1"/>
</dbReference>
<dbReference type="FunFam" id="3.30.230.10:FF:000004">
    <property type="entry name" value="40S ribosomal protein S2"/>
    <property type="match status" value="1"/>
</dbReference>
<dbReference type="Gene3D" id="3.30.160.20">
    <property type="match status" value="1"/>
</dbReference>
<dbReference type="Gene3D" id="3.30.230.10">
    <property type="match status" value="1"/>
</dbReference>
<dbReference type="HAMAP" id="MF_01307_A">
    <property type="entry name" value="Ribosomal_uS5_A"/>
    <property type="match status" value="1"/>
</dbReference>
<dbReference type="InterPro" id="IPR020568">
    <property type="entry name" value="Ribosomal_Su5_D2-typ_SF"/>
</dbReference>
<dbReference type="InterPro" id="IPR000851">
    <property type="entry name" value="Ribosomal_uS5"/>
</dbReference>
<dbReference type="InterPro" id="IPR047866">
    <property type="entry name" value="Ribosomal_uS5_arc"/>
</dbReference>
<dbReference type="InterPro" id="IPR005324">
    <property type="entry name" value="Ribosomal_uS5_C"/>
</dbReference>
<dbReference type="InterPro" id="IPR005711">
    <property type="entry name" value="Ribosomal_uS5_euk/arc"/>
</dbReference>
<dbReference type="InterPro" id="IPR013810">
    <property type="entry name" value="Ribosomal_uS5_N"/>
</dbReference>
<dbReference type="InterPro" id="IPR018192">
    <property type="entry name" value="Ribosomal_uS5_N_CS"/>
</dbReference>
<dbReference type="InterPro" id="IPR014721">
    <property type="entry name" value="Ribsml_uS5_D2-typ_fold_subgr"/>
</dbReference>
<dbReference type="NCBIfam" id="NF003125">
    <property type="entry name" value="PRK04044.1"/>
    <property type="match status" value="1"/>
</dbReference>
<dbReference type="NCBIfam" id="TIGR01020">
    <property type="entry name" value="uS5_euk_arch"/>
    <property type="match status" value="1"/>
</dbReference>
<dbReference type="PANTHER" id="PTHR48277">
    <property type="entry name" value="MITOCHONDRIAL RIBOSOMAL PROTEIN S5"/>
    <property type="match status" value="1"/>
</dbReference>
<dbReference type="PANTHER" id="PTHR48277:SF1">
    <property type="entry name" value="MITOCHONDRIAL RIBOSOMAL PROTEIN S5"/>
    <property type="match status" value="1"/>
</dbReference>
<dbReference type="Pfam" id="PF00333">
    <property type="entry name" value="Ribosomal_S5"/>
    <property type="match status" value="1"/>
</dbReference>
<dbReference type="Pfam" id="PF03719">
    <property type="entry name" value="Ribosomal_S5_C"/>
    <property type="match status" value="1"/>
</dbReference>
<dbReference type="SUPFAM" id="SSF54768">
    <property type="entry name" value="dsRNA-binding domain-like"/>
    <property type="match status" value="1"/>
</dbReference>
<dbReference type="SUPFAM" id="SSF54211">
    <property type="entry name" value="Ribosomal protein S5 domain 2-like"/>
    <property type="match status" value="1"/>
</dbReference>
<dbReference type="PROSITE" id="PS00585">
    <property type="entry name" value="RIBOSOMAL_S5"/>
    <property type="match status" value="1"/>
</dbReference>
<dbReference type="PROSITE" id="PS50881">
    <property type="entry name" value="S5_DSRBD"/>
    <property type="match status" value="1"/>
</dbReference>
<gene>
    <name evidence="1" type="primary">rps5</name>
    <name type="ordered locus">Mboo_0552</name>
</gene>
<protein>
    <recommendedName>
        <fullName evidence="1">Small ribosomal subunit protein uS5</fullName>
    </recommendedName>
    <alternativeName>
        <fullName evidence="2">30S ribosomal protein S5</fullName>
    </alternativeName>
</protein>